<geneLocation type="plasmid">
    <name>pXO2</name>
</geneLocation>
<reference key="1">
    <citation type="journal article" date="1999" name="J. Appl. Microbiol.">
        <title>Sequence, assembly and analysis of pXO1 and pXO2.</title>
        <authorList>
            <person name="Okinaka R.T."/>
            <person name="Cloud K."/>
            <person name="Hampton O."/>
            <person name="Hoffmaster A."/>
            <person name="Hill K.K."/>
            <person name="Keim P."/>
            <person name="Koehler T."/>
            <person name="Lamke G."/>
            <person name="Kumano S."/>
            <person name="Manter D."/>
            <person name="Martinez Y."/>
            <person name="Ricke D."/>
            <person name="Svensson R."/>
            <person name="Jackson P.J."/>
        </authorList>
    </citation>
    <scope>NUCLEOTIDE SEQUENCE [GENOMIC DNA]</scope>
    <source>
        <strain>Pasteur</strain>
    </source>
</reference>
<reference key="2">
    <citation type="journal article" date="2002" name="Science">
        <title>Comparative genome sequencing for discovery of novel polymorphisms in Bacillus anthracis.</title>
        <authorList>
            <person name="Read T.D."/>
            <person name="Salzberg S.L."/>
            <person name="Pop M."/>
            <person name="Shumway M.F."/>
            <person name="Umayam L."/>
            <person name="Jiang L."/>
            <person name="Holtzapple E."/>
            <person name="Busch J.D."/>
            <person name="Smith K.L."/>
            <person name="Schupp J.M."/>
            <person name="Solomon D."/>
            <person name="Keim P."/>
            <person name="Fraser C.M."/>
        </authorList>
    </citation>
    <scope>NUCLEOTIDE SEQUENCE [GENOMIC DNA]</scope>
    <source>
        <strain>Ames / isolate Florida / A2012</strain>
    </source>
</reference>
<reference key="3">
    <citation type="journal article" date="2009" name="J. Bacteriol.">
        <title>The complete genome sequence of Bacillus anthracis Ames 'Ancestor'.</title>
        <authorList>
            <person name="Ravel J."/>
            <person name="Jiang L."/>
            <person name="Stanley S.T."/>
            <person name="Wilson M.R."/>
            <person name="Decker R.S."/>
            <person name="Read T.D."/>
            <person name="Worsham P."/>
            <person name="Keim P.S."/>
            <person name="Salzberg S.L."/>
            <person name="Fraser-Liggett C.M."/>
            <person name="Rasko D.A."/>
        </authorList>
    </citation>
    <scope>NUCLEOTIDE SEQUENCE [LARGE SCALE GENOMIC DNA]</scope>
    <source>
        <strain>Ames ancestor</strain>
    </source>
</reference>
<comment type="subcellular location">
    <subcellularLocation>
        <location evidence="2">Membrane</location>
        <topology evidence="2">Single-pass membrane protein</topology>
    </subcellularLocation>
</comment>
<proteinExistence type="predicted"/>
<dbReference type="EMBL" id="AF188935">
    <property type="protein sequence ID" value="AAF13626.1"/>
    <property type="molecule type" value="Genomic_DNA"/>
</dbReference>
<dbReference type="EMBL" id="AE011191">
    <property type="protein sequence ID" value="AAM26180.1"/>
    <property type="molecule type" value="Genomic_DNA"/>
</dbReference>
<dbReference type="EMBL" id="AE017335">
    <property type="protein sequence ID" value="AAT28950.2"/>
    <property type="molecule type" value="Genomic_DNA"/>
</dbReference>
<dbReference type="RefSeq" id="NP_053176.1">
    <property type="nucleotide sequence ID" value="NC_002146.1"/>
</dbReference>
<dbReference type="RefSeq" id="WP_000887445.1">
    <property type="nucleotide sequence ID" value="NZ_VTZL01000009.1"/>
</dbReference>
<dbReference type="RefSeq" id="WP_010891428.1">
    <property type="nucleotide sequence ID" value="NC_002146.1"/>
</dbReference>
<dbReference type="GeneID" id="45025333"/>
<dbReference type="KEGG" id="bar:GBAA_pXO2_0020"/>
<dbReference type="HOGENOM" id="CLU_2118037_0_0_9"/>
<dbReference type="OMA" id="SYKQQVN"/>
<dbReference type="Proteomes" id="UP000000594">
    <property type="component" value="Plasmid pXO2"/>
</dbReference>
<dbReference type="GO" id="GO:0016020">
    <property type="term" value="C:membrane"/>
    <property type="evidence" value="ECO:0007669"/>
    <property type="project" value="UniProtKB-SubCell"/>
</dbReference>
<gene>
    <name type="ordered locus">pXO2-21</name>
    <name type="ordered locus">BXB0020</name>
    <name type="ordered locus">GBAA_pXO2_0020</name>
</gene>
<name>Y6520_BACAN</name>
<sequence>MLDSSIMLIVKWFVGLMLIMMMVAVSLFCIQLSDVNLYKQQVNYQIERHGGLTKEAGAYLKDYSEKQYQGALSVKSDQLNKKVNFGDVVDYQVVANLKIILFNLPDVEMKFHGSATSQVR</sequence>
<keyword id="KW-0472">Membrane</keyword>
<keyword id="KW-0614">Plasmid</keyword>
<keyword id="KW-1185">Reference proteome</keyword>
<keyword id="KW-0812">Transmembrane</keyword>
<keyword id="KW-1133">Transmembrane helix</keyword>
<feature type="chain" id="PRO_0000216839" description="Uncharacterized protein pXO2-21/BXB0020/GBAA_pXO2_0020">
    <location>
        <begin position="1"/>
        <end position="120"/>
    </location>
</feature>
<feature type="transmembrane region" description="Helical" evidence="1">
    <location>
        <begin position="8"/>
        <end position="28"/>
    </location>
</feature>
<feature type="sequence variant" description="In strain: Pasteur.">
    <original>L</original>
    <variation>V</variation>
    <location>
        <position position="2"/>
    </location>
</feature>
<accession>Q6F056</accession>
<accession>Q8KYG4</accession>
<accession>Q9RN11</accession>
<organism>
    <name type="scientific">Bacillus anthracis</name>
    <dbReference type="NCBI Taxonomy" id="1392"/>
    <lineage>
        <taxon>Bacteria</taxon>
        <taxon>Bacillati</taxon>
        <taxon>Bacillota</taxon>
        <taxon>Bacilli</taxon>
        <taxon>Bacillales</taxon>
        <taxon>Bacillaceae</taxon>
        <taxon>Bacillus</taxon>
        <taxon>Bacillus cereus group</taxon>
    </lineage>
</organism>
<protein>
    <recommendedName>
        <fullName>Uncharacterized protein pXO2-21/BXB0020/GBAA_pXO2_0020</fullName>
    </recommendedName>
</protein>
<evidence type="ECO:0000255" key="1"/>
<evidence type="ECO:0000305" key="2"/>